<name>ACCA_SYNC1</name>
<feature type="chain" id="PRO_0000223798" description="Acetyl-coenzyme A carboxylase carboxyl transferase subunit alpha">
    <location>
        <begin position="1"/>
        <end position="317"/>
    </location>
</feature>
<feature type="domain" description="CoA carboxyltransferase C-terminal" evidence="2">
    <location>
        <begin position="37"/>
        <end position="292"/>
    </location>
</feature>
<sequence>MQFYLDFEKPLVELEQKLSELRDYSTDEVDFSGEIQRLEKKAEKLRREIFSNLNRWQVTQLARHVNRPFTLDFVEHVFTDWFEVHGDRNFRDDPALVCGFARLDGQPCAVIGHQKGRDTKEKVYRNFGMPNPEGYRKALRVMQMAEQFGLPIFTFVDTPGAFPGIGAEERGQAEAIARNLREMAALKVPVIVTVTGEGGSGGALAVAVGNRVLMMENAVYSVISPEGCAAILWKDGAKGPVAAEALKLTAGDIQNLGCVIDEVIPEPLGGAHSDHKAAAEQVRICLKKHLDDLKDLSSDELREQRYQKLRAMTMVQE</sequence>
<comment type="function">
    <text evidence="1">Component of the acetyl coenzyme A carboxylase (ACC) complex. First, biotin carboxylase catalyzes the carboxylation of biotin on its carrier protein (BCCP) and then the CO(2) group is transferred by the carboxyltransferase to acetyl-CoA to form malonyl-CoA.</text>
</comment>
<comment type="catalytic activity">
    <reaction evidence="1">
        <text>N(6)-carboxybiotinyl-L-lysyl-[protein] + acetyl-CoA = N(6)-biotinyl-L-lysyl-[protein] + malonyl-CoA</text>
        <dbReference type="Rhea" id="RHEA:54728"/>
        <dbReference type="Rhea" id="RHEA-COMP:10505"/>
        <dbReference type="Rhea" id="RHEA-COMP:10506"/>
        <dbReference type="ChEBI" id="CHEBI:57288"/>
        <dbReference type="ChEBI" id="CHEBI:57384"/>
        <dbReference type="ChEBI" id="CHEBI:83144"/>
        <dbReference type="ChEBI" id="CHEBI:83145"/>
        <dbReference type="EC" id="2.1.3.15"/>
    </reaction>
</comment>
<comment type="pathway">
    <text evidence="1">Lipid metabolism; malonyl-CoA biosynthesis; malonyl-CoA from acetyl-CoA: step 1/1.</text>
</comment>
<comment type="subunit">
    <text evidence="1">Acetyl-CoA carboxylase is a heterohexamer composed of biotin carboxyl carrier protein (AccB), biotin carboxylase (AccC) and two subunits each of ACCase subunit alpha (AccA) and ACCase subunit beta (AccD).</text>
</comment>
<comment type="subcellular location">
    <subcellularLocation>
        <location evidence="1">Cytoplasm</location>
    </subcellularLocation>
</comment>
<comment type="similarity">
    <text evidence="1">Belongs to the AccA family.</text>
</comment>
<evidence type="ECO:0000255" key="1">
    <source>
        <dbReference type="HAMAP-Rule" id="MF_00823"/>
    </source>
</evidence>
<evidence type="ECO:0000255" key="2">
    <source>
        <dbReference type="PROSITE-ProRule" id="PRU01137"/>
    </source>
</evidence>
<keyword id="KW-0067">ATP-binding</keyword>
<keyword id="KW-0963">Cytoplasm</keyword>
<keyword id="KW-0275">Fatty acid biosynthesis</keyword>
<keyword id="KW-0276">Fatty acid metabolism</keyword>
<keyword id="KW-0444">Lipid biosynthesis</keyword>
<keyword id="KW-0443">Lipid metabolism</keyword>
<keyword id="KW-0547">Nucleotide-binding</keyword>
<keyword id="KW-1185">Reference proteome</keyword>
<keyword id="KW-0808">Transferase</keyword>
<dbReference type="EC" id="2.1.3.15" evidence="1"/>
<dbReference type="EMBL" id="CP000142">
    <property type="protein sequence ID" value="ABA88472.1"/>
    <property type="molecule type" value="Genomic_DNA"/>
</dbReference>
<dbReference type="RefSeq" id="WP_011340946.1">
    <property type="nucleotide sequence ID" value="NC_007498.2"/>
</dbReference>
<dbReference type="SMR" id="Q3A585"/>
<dbReference type="STRING" id="338963.Pcar_1223"/>
<dbReference type="KEGG" id="pca:Pcar_1223"/>
<dbReference type="eggNOG" id="COG0825">
    <property type="taxonomic scope" value="Bacteria"/>
</dbReference>
<dbReference type="HOGENOM" id="CLU_015486_0_2_7"/>
<dbReference type="OrthoDB" id="9808023at2"/>
<dbReference type="UniPathway" id="UPA00655">
    <property type="reaction ID" value="UER00711"/>
</dbReference>
<dbReference type="Proteomes" id="UP000002534">
    <property type="component" value="Chromosome"/>
</dbReference>
<dbReference type="GO" id="GO:0009317">
    <property type="term" value="C:acetyl-CoA carboxylase complex"/>
    <property type="evidence" value="ECO:0007669"/>
    <property type="project" value="InterPro"/>
</dbReference>
<dbReference type="GO" id="GO:0003989">
    <property type="term" value="F:acetyl-CoA carboxylase activity"/>
    <property type="evidence" value="ECO:0007669"/>
    <property type="project" value="InterPro"/>
</dbReference>
<dbReference type="GO" id="GO:0005524">
    <property type="term" value="F:ATP binding"/>
    <property type="evidence" value="ECO:0007669"/>
    <property type="project" value="UniProtKB-KW"/>
</dbReference>
<dbReference type="GO" id="GO:0016743">
    <property type="term" value="F:carboxyl- or carbamoyltransferase activity"/>
    <property type="evidence" value="ECO:0007669"/>
    <property type="project" value="UniProtKB-UniRule"/>
</dbReference>
<dbReference type="GO" id="GO:0006633">
    <property type="term" value="P:fatty acid biosynthetic process"/>
    <property type="evidence" value="ECO:0007669"/>
    <property type="project" value="UniProtKB-KW"/>
</dbReference>
<dbReference type="GO" id="GO:2001295">
    <property type="term" value="P:malonyl-CoA biosynthetic process"/>
    <property type="evidence" value="ECO:0007669"/>
    <property type="project" value="UniProtKB-UniRule"/>
</dbReference>
<dbReference type="Gene3D" id="3.90.226.10">
    <property type="entry name" value="2-enoyl-CoA Hydratase, Chain A, domain 1"/>
    <property type="match status" value="1"/>
</dbReference>
<dbReference type="HAMAP" id="MF_00823">
    <property type="entry name" value="AcetylCoA_CT_alpha"/>
    <property type="match status" value="1"/>
</dbReference>
<dbReference type="InterPro" id="IPR001095">
    <property type="entry name" value="Acetyl_CoA_COase_a_su"/>
</dbReference>
<dbReference type="InterPro" id="IPR029045">
    <property type="entry name" value="ClpP/crotonase-like_dom_sf"/>
</dbReference>
<dbReference type="InterPro" id="IPR011763">
    <property type="entry name" value="COA_CT_C"/>
</dbReference>
<dbReference type="NCBIfam" id="TIGR00513">
    <property type="entry name" value="accA"/>
    <property type="match status" value="1"/>
</dbReference>
<dbReference type="NCBIfam" id="NF041504">
    <property type="entry name" value="AccA_sub"/>
    <property type="match status" value="1"/>
</dbReference>
<dbReference type="NCBIfam" id="NF004344">
    <property type="entry name" value="PRK05724.1"/>
    <property type="match status" value="1"/>
</dbReference>
<dbReference type="PANTHER" id="PTHR42853">
    <property type="entry name" value="ACETYL-COENZYME A CARBOXYLASE CARBOXYL TRANSFERASE SUBUNIT ALPHA"/>
    <property type="match status" value="1"/>
</dbReference>
<dbReference type="PANTHER" id="PTHR42853:SF3">
    <property type="entry name" value="ACETYL-COENZYME A CARBOXYLASE CARBOXYL TRANSFERASE SUBUNIT ALPHA, CHLOROPLASTIC"/>
    <property type="match status" value="1"/>
</dbReference>
<dbReference type="Pfam" id="PF03255">
    <property type="entry name" value="ACCA"/>
    <property type="match status" value="1"/>
</dbReference>
<dbReference type="PRINTS" id="PR01069">
    <property type="entry name" value="ACCCTRFRASEA"/>
</dbReference>
<dbReference type="SUPFAM" id="SSF52096">
    <property type="entry name" value="ClpP/crotonase"/>
    <property type="match status" value="1"/>
</dbReference>
<dbReference type="PROSITE" id="PS50989">
    <property type="entry name" value="COA_CT_CTER"/>
    <property type="match status" value="1"/>
</dbReference>
<gene>
    <name evidence="1" type="primary">accA</name>
    <name type="ordered locus">Pcar_1223</name>
</gene>
<organism>
    <name type="scientific">Syntrophotalea carbinolica (strain DSM 2380 / NBRC 103641 / GraBd1)</name>
    <name type="common">Pelobacter carbinolicus</name>
    <dbReference type="NCBI Taxonomy" id="338963"/>
    <lineage>
        <taxon>Bacteria</taxon>
        <taxon>Pseudomonadati</taxon>
        <taxon>Thermodesulfobacteriota</taxon>
        <taxon>Desulfuromonadia</taxon>
        <taxon>Desulfuromonadales</taxon>
        <taxon>Syntrophotaleaceae</taxon>
        <taxon>Syntrophotalea</taxon>
    </lineage>
</organism>
<protein>
    <recommendedName>
        <fullName evidence="1">Acetyl-coenzyme A carboxylase carboxyl transferase subunit alpha</fullName>
        <shortName evidence="1">ACCase subunit alpha</shortName>
        <shortName evidence="1">Acetyl-CoA carboxylase carboxyltransferase subunit alpha</shortName>
        <ecNumber evidence="1">2.1.3.15</ecNumber>
    </recommendedName>
</protein>
<accession>Q3A585</accession>
<reference key="1">
    <citation type="submission" date="2005-10" db="EMBL/GenBank/DDBJ databases">
        <title>Complete sequence of Pelobacter carbinolicus DSM 2380.</title>
        <authorList>
            <person name="Copeland A."/>
            <person name="Lucas S."/>
            <person name="Lapidus A."/>
            <person name="Barry K."/>
            <person name="Detter J.C."/>
            <person name="Glavina T."/>
            <person name="Hammon N."/>
            <person name="Israni S."/>
            <person name="Pitluck S."/>
            <person name="Chertkov O."/>
            <person name="Schmutz J."/>
            <person name="Larimer F."/>
            <person name="Land M."/>
            <person name="Kyrpides N."/>
            <person name="Ivanova N."/>
            <person name="Richardson P."/>
        </authorList>
    </citation>
    <scope>NUCLEOTIDE SEQUENCE [LARGE SCALE GENOMIC DNA]</scope>
    <source>
        <strain>DSM 2380 / NBRC 103641 / GraBd1</strain>
    </source>
</reference>
<proteinExistence type="inferred from homology"/>